<accession>Q3B4W0</accession>
<dbReference type="EC" id="7.1.1.-" evidence="1"/>
<dbReference type="EMBL" id="CP000096">
    <property type="protein sequence ID" value="ABB23621.1"/>
    <property type="molecule type" value="Genomic_DNA"/>
</dbReference>
<dbReference type="SMR" id="Q3B4W0"/>
<dbReference type="STRING" id="319225.Plut_0746"/>
<dbReference type="KEGG" id="plt:Plut_0746"/>
<dbReference type="eggNOG" id="COG0649">
    <property type="taxonomic scope" value="Bacteria"/>
</dbReference>
<dbReference type="HOGENOM" id="CLU_015134_1_2_10"/>
<dbReference type="Proteomes" id="UP000002709">
    <property type="component" value="Chromosome"/>
</dbReference>
<dbReference type="GO" id="GO:0005886">
    <property type="term" value="C:plasma membrane"/>
    <property type="evidence" value="ECO:0007669"/>
    <property type="project" value="UniProtKB-SubCell"/>
</dbReference>
<dbReference type="GO" id="GO:0051287">
    <property type="term" value="F:NAD binding"/>
    <property type="evidence" value="ECO:0007669"/>
    <property type="project" value="InterPro"/>
</dbReference>
<dbReference type="GO" id="GO:0050136">
    <property type="term" value="F:NADH:ubiquinone reductase (non-electrogenic) activity"/>
    <property type="evidence" value="ECO:0007669"/>
    <property type="project" value="UniProtKB-UniRule"/>
</dbReference>
<dbReference type="GO" id="GO:0048038">
    <property type="term" value="F:quinone binding"/>
    <property type="evidence" value="ECO:0007669"/>
    <property type="project" value="UniProtKB-KW"/>
</dbReference>
<dbReference type="Gene3D" id="1.10.645.10">
    <property type="entry name" value="Cytochrome-c3 Hydrogenase, chain B"/>
    <property type="match status" value="1"/>
</dbReference>
<dbReference type="HAMAP" id="MF_01358">
    <property type="entry name" value="NDH1_NuoD"/>
    <property type="match status" value="1"/>
</dbReference>
<dbReference type="InterPro" id="IPR001135">
    <property type="entry name" value="NADH_Q_OxRdtase_suD"/>
</dbReference>
<dbReference type="InterPro" id="IPR022885">
    <property type="entry name" value="NDH1_su_D/H"/>
</dbReference>
<dbReference type="InterPro" id="IPR029014">
    <property type="entry name" value="NiFe-Hase_large"/>
</dbReference>
<dbReference type="NCBIfam" id="NF004739">
    <property type="entry name" value="PRK06075.1"/>
    <property type="match status" value="1"/>
</dbReference>
<dbReference type="PANTHER" id="PTHR11993:SF10">
    <property type="entry name" value="NADH DEHYDROGENASE [UBIQUINONE] IRON-SULFUR PROTEIN 2, MITOCHONDRIAL"/>
    <property type="match status" value="1"/>
</dbReference>
<dbReference type="PANTHER" id="PTHR11993">
    <property type="entry name" value="NADH-UBIQUINONE OXIDOREDUCTASE 49 KDA SUBUNIT"/>
    <property type="match status" value="1"/>
</dbReference>
<dbReference type="Pfam" id="PF00346">
    <property type="entry name" value="Complex1_49kDa"/>
    <property type="match status" value="1"/>
</dbReference>
<dbReference type="SUPFAM" id="SSF56762">
    <property type="entry name" value="HydB/Nqo4-like"/>
    <property type="match status" value="1"/>
</dbReference>
<organism>
    <name type="scientific">Chlorobium luteolum (strain DSM 273 / BCRC 81028 / 2530)</name>
    <name type="common">Pelodictyon luteolum</name>
    <dbReference type="NCBI Taxonomy" id="319225"/>
    <lineage>
        <taxon>Bacteria</taxon>
        <taxon>Pseudomonadati</taxon>
        <taxon>Chlorobiota</taxon>
        <taxon>Chlorobiia</taxon>
        <taxon>Chlorobiales</taxon>
        <taxon>Chlorobiaceae</taxon>
        <taxon>Chlorobium/Pelodictyon group</taxon>
        <taxon>Pelodictyon</taxon>
    </lineage>
</organism>
<reference key="1">
    <citation type="submission" date="2005-08" db="EMBL/GenBank/DDBJ databases">
        <title>Complete sequence of Pelodictyon luteolum DSM 273.</title>
        <authorList>
            <consortium name="US DOE Joint Genome Institute"/>
            <person name="Copeland A."/>
            <person name="Lucas S."/>
            <person name="Lapidus A."/>
            <person name="Barry K."/>
            <person name="Detter J.C."/>
            <person name="Glavina T."/>
            <person name="Hammon N."/>
            <person name="Israni S."/>
            <person name="Pitluck S."/>
            <person name="Bryant D."/>
            <person name="Schmutz J."/>
            <person name="Larimer F."/>
            <person name="Land M."/>
            <person name="Kyrpides N."/>
            <person name="Ivanova N."/>
            <person name="Richardson P."/>
        </authorList>
    </citation>
    <scope>NUCLEOTIDE SEQUENCE [LARGE SCALE GENOMIC DNA]</scope>
    <source>
        <strain>DSM 273 / BCRC 81028 / 2530</strain>
    </source>
</reference>
<gene>
    <name evidence="1" type="primary">nuoD</name>
    <name type="ordered locus">Plut_0746</name>
</gene>
<name>NUOD_CHLL3</name>
<sequence>MAGQGSVRLTRKSDNVVIIEKDLATEEMVLSMGPQHPSTHGVLRLECRTDGEVVTEAEPYLGYLHRCFEKYCENVDYPAIVPYTDRMDYLAGMNSEMAYAIAVEKLLDIEIPRRVEFIRVIVSELNRIASHLVAIGTYAIDLGAFTPFLFCFRDREHILNMLEWASGARMLYNYIWIGGLAYDVPADFQKRVGEFVDYFRPKALELSRLLTENEIFVKRTKGIGIMPADVAINYGWSGPMLRGSGVQWDLRRNDPYSIYPELDFAVPVPDGKFSDVGDCLSRHLVRALEIEESLKIIEQCIEKMPSAEGFDPRAAVPKRIRPKAGEVYARAENPRGELGFYILSDGKSTSPVRCKARSSCFVNLSAMKDLSKGQLIPDLVAIIGSIDIVLGEVDR</sequence>
<proteinExistence type="inferred from homology"/>
<protein>
    <recommendedName>
        <fullName evidence="1">NADH-quinone oxidoreductase subunit D</fullName>
        <ecNumber evidence="1">7.1.1.-</ecNumber>
    </recommendedName>
    <alternativeName>
        <fullName evidence="1">NADH dehydrogenase I subunit D</fullName>
    </alternativeName>
    <alternativeName>
        <fullName evidence="1">NDH-1 subunit D</fullName>
    </alternativeName>
</protein>
<feature type="chain" id="PRO_0000357885" description="NADH-quinone oxidoreductase subunit D">
    <location>
        <begin position="1"/>
        <end position="395"/>
    </location>
</feature>
<keyword id="KW-0997">Cell inner membrane</keyword>
<keyword id="KW-1003">Cell membrane</keyword>
<keyword id="KW-0472">Membrane</keyword>
<keyword id="KW-0520">NAD</keyword>
<keyword id="KW-0874">Quinone</keyword>
<keyword id="KW-1185">Reference proteome</keyword>
<keyword id="KW-1278">Translocase</keyword>
<keyword id="KW-0813">Transport</keyword>
<comment type="function">
    <text evidence="1">NDH-1 shuttles electrons from NADH, via FMN and iron-sulfur (Fe-S) centers, to quinones in the respiratory chain. The immediate electron acceptor for the enzyme in this species is believed to be a menaquinone. Couples the redox reaction to proton translocation (for every two electrons transferred, four hydrogen ions are translocated across the cytoplasmic membrane), and thus conserves the redox energy in a proton gradient.</text>
</comment>
<comment type="catalytic activity">
    <reaction evidence="1">
        <text>a quinone + NADH + 5 H(+)(in) = a quinol + NAD(+) + 4 H(+)(out)</text>
        <dbReference type="Rhea" id="RHEA:57888"/>
        <dbReference type="ChEBI" id="CHEBI:15378"/>
        <dbReference type="ChEBI" id="CHEBI:24646"/>
        <dbReference type="ChEBI" id="CHEBI:57540"/>
        <dbReference type="ChEBI" id="CHEBI:57945"/>
        <dbReference type="ChEBI" id="CHEBI:132124"/>
    </reaction>
</comment>
<comment type="subunit">
    <text evidence="1">NDH-1 is composed of 14 different subunits. Subunits NuoB, C, D, E, F, and G constitute the peripheral sector of the complex.</text>
</comment>
<comment type="subcellular location">
    <subcellularLocation>
        <location evidence="1">Cell inner membrane</location>
        <topology evidence="1">Peripheral membrane protein</topology>
        <orientation evidence="1">Cytoplasmic side</orientation>
    </subcellularLocation>
</comment>
<comment type="similarity">
    <text evidence="1">Belongs to the complex I 49 kDa subunit family.</text>
</comment>
<evidence type="ECO:0000255" key="1">
    <source>
        <dbReference type="HAMAP-Rule" id="MF_01358"/>
    </source>
</evidence>